<dbReference type="EC" id="2.7.10.1"/>
<dbReference type="EMBL" id="AB008451">
    <property type="protein sequence ID" value="BAA23127.1"/>
    <property type="molecule type" value="mRNA"/>
</dbReference>
<dbReference type="SMR" id="O18735"/>
<dbReference type="BioGRID" id="139801">
    <property type="interactions" value="1"/>
</dbReference>
<dbReference type="FunCoup" id="O18735">
    <property type="interactions" value="767"/>
</dbReference>
<dbReference type="STRING" id="9615.ENSCAFP00000024079"/>
<dbReference type="GlyCosmos" id="O18735">
    <property type="glycosylation" value="6 sites, No reported glycans"/>
</dbReference>
<dbReference type="PaxDb" id="9612-ENSCAFP00000024079"/>
<dbReference type="eggNOG" id="KOG1025">
    <property type="taxonomic scope" value="Eukaryota"/>
</dbReference>
<dbReference type="InParanoid" id="O18735"/>
<dbReference type="OrthoDB" id="6219513at2759"/>
<dbReference type="Proteomes" id="UP000002254">
    <property type="component" value="Unplaced"/>
</dbReference>
<dbReference type="Proteomes" id="UP000694429">
    <property type="component" value="Unplaced"/>
</dbReference>
<dbReference type="Proteomes" id="UP000694542">
    <property type="component" value="Unplaced"/>
</dbReference>
<dbReference type="Proteomes" id="UP000805418">
    <property type="component" value="Unplaced"/>
</dbReference>
<dbReference type="GO" id="GO:0009925">
    <property type="term" value="C:basal plasma membrane"/>
    <property type="evidence" value="ECO:0000318"/>
    <property type="project" value="GO_Central"/>
</dbReference>
<dbReference type="GO" id="GO:0005769">
    <property type="term" value="C:early endosome"/>
    <property type="evidence" value="ECO:0007669"/>
    <property type="project" value="UniProtKB-SubCell"/>
</dbReference>
<dbReference type="GO" id="GO:0005634">
    <property type="term" value="C:nucleus"/>
    <property type="evidence" value="ECO:0000250"/>
    <property type="project" value="UniProtKB"/>
</dbReference>
<dbReference type="GO" id="GO:0048471">
    <property type="term" value="C:perinuclear region of cytoplasm"/>
    <property type="evidence" value="ECO:0007669"/>
    <property type="project" value="UniProtKB-SubCell"/>
</dbReference>
<dbReference type="GO" id="GO:0005886">
    <property type="term" value="C:plasma membrane"/>
    <property type="evidence" value="ECO:0000250"/>
    <property type="project" value="UniProtKB"/>
</dbReference>
<dbReference type="GO" id="GO:0043235">
    <property type="term" value="C:receptor complex"/>
    <property type="evidence" value="ECO:0000318"/>
    <property type="project" value="GO_Central"/>
</dbReference>
<dbReference type="GO" id="GO:0032587">
    <property type="term" value="C:ruffle membrane"/>
    <property type="evidence" value="ECO:0007669"/>
    <property type="project" value="UniProtKB-SubCell"/>
</dbReference>
<dbReference type="GO" id="GO:0005524">
    <property type="term" value="F:ATP binding"/>
    <property type="evidence" value="ECO:0007669"/>
    <property type="project" value="UniProtKB-KW"/>
</dbReference>
<dbReference type="GO" id="GO:0001042">
    <property type="term" value="F:RNA polymerase I core binding"/>
    <property type="evidence" value="ECO:0000250"/>
    <property type="project" value="UniProtKB"/>
</dbReference>
<dbReference type="GO" id="GO:0004714">
    <property type="term" value="F:transmembrane receptor protein tyrosine kinase activity"/>
    <property type="evidence" value="ECO:0000318"/>
    <property type="project" value="GO_Central"/>
</dbReference>
<dbReference type="GO" id="GO:0071364">
    <property type="term" value="P:cellular response to epidermal growth factor stimulus"/>
    <property type="evidence" value="ECO:0000250"/>
    <property type="project" value="UniProtKB"/>
</dbReference>
<dbReference type="GO" id="GO:0071363">
    <property type="term" value="P:cellular response to growth factor stimulus"/>
    <property type="evidence" value="ECO:0000250"/>
    <property type="project" value="UniProtKB"/>
</dbReference>
<dbReference type="GO" id="GO:0007173">
    <property type="term" value="P:epidermal growth factor receptor signaling pathway"/>
    <property type="evidence" value="ECO:0000318"/>
    <property type="project" value="GO_Central"/>
</dbReference>
<dbReference type="GO" id="GO:0035556">
    <property type="term" value="P:intracellular signal transduction"/>
    <property type="evidence" value="ECO:0000250"/>
    <property type="project" value="UniProtKB"/>
</dbReference>
<dbReference type="GO" id="GO:0043066">
    <property type="term" value="P:negative regulation of apoptotic process"/>
    <property type="evidence" value="ECO:0000318"/>
    <property type="project" value="GO_Central"/>
</dbReference>
<dbReference type="GO" id="GO:0030182">
    <property type="term" value="P:neuron differentiation"/>
    <property type="evidence" value="ECO:0000318"/>
    <property type="project" value="GO_Central"/>
</dbReference>
<dbReference type="GO" id="GO:0030307">
    <property type="term" value="P:positive regulation of cell growth"/>
    <property type="evidence" value="ECO:0000250"/>
    <property type="project" value="UniProtKB"/>
</dbReference>
<dbReference type="GO" id="GO:0050679">
    <property type="term" value="P:positive regulation of epithelial cell proliferation"/>
    <property type="evidence" value="ECO:0000318"/>
    <property type="project" value="GO_Central"/>
</dbReference>
<dbReference type="GO" id="GO:0043410">
    <property type="term" value="P:positive regulation of MAPK cascade"/>
    <property type="evidence" value="ECO:0000318"/>
    <property type="project" value="GO_Central"/>
</dbReference>
<dbReference type="GO" id="GO:0090314">
    <property type="term" value="P:positive regulation of protein targeting to membrane"/>
    <property type="evidence" value="ECO:0000250"/>
    <property type="project" value="UniProtKB"/>
</dbReference>
<dbReference type="GO" id="GO:0045943">
    <property type="term" value="P:positive regulation of transcription by RNA polymerase I"/>
    <property type="evidence" value="ECO:0000250"/>
    <property type="project" value="UniProtKB"/>
</dbReference>
<dbReference type="GO" id="GO:0045727">
    <property type="term" value="P:positive regulation of translation"/>
    <property type="evidence" value="ECO:0000250"/>
    <property type="project" value="UniProtKB"/>
</dbReference>
<dbReference type="GO" id="GO:0070372">
    <property type="term" value="P:regulation of ERK1 and ERK2 cascade"/>
    <property type="evidence" value="ECO:0000250"/>
    <property type="project" value="UniProtKB"/>
</dbReference>
<dbReference type="GO" id="GO:0032886">
    <property type="term" value="P:regulation of microtubule-based process"/>
    <property type="evidence" value="ECO:0000250"/>
    <property type="project" value="UniProtKB"/>
</dbReference>
<dbReference type="CDD" id="cd00064">
    <property type="entry name" value="FU"/>
    <property type="match status" value="3"/>
</dbReference>
<dbReference type="CDD" id="cd05109">
    <property type="entry name" value="PTKc_HER2"/>
    <property type="match status" value="1"/>
</dbReference>
<dbReference type="CDD" id="cd12094">
    <property type="entry name" value="TM_ErbB2"/>
    <property type="match status" value="1"/>
</dbReference>
<dbReference type="FunFam" id="1.20.5.100:FF:000007">
    <property type="entry name" value="Receptor protein-tyrosine kinase"/>
    <property type="match status" value="1"/>
</dbReference>
<dbReference type="FunFam" id="2.10.220.10:FF:000009">
    <property type="entry name" value="Receptor protein-tyrosine kinase"/>
    <property type="match status" value="1"/>
</dbReference>
<dbReference type="FunFam" id="2.10.220.10:FF:000010">
    <property type="entry name" value="Receptor protein-tyrosine kinase"/>
    <property type="match status" value="1"/>
</dbReference>
<dbReference type="FunFam" id="3.30.200.20:FF:000184">
    <property type="entry name" value="Receptor protein-tyrosine kinase"/>
    <property type="match status" value="1"/>
</dbReference>
<dbReference type="FunFam" id="3.80.20.20:FF:000007">
    <property type="entry name" value="Receptor protein-tyrosine kinase"/>
    <property type="match status" value="1"/>
</dbReference>
<dbReference type="FunFam" id="3.80.20.20:FF:000008">
    <property type="entry name" value="Receptor protein-tyrosine kinase"/>
    <property type="match status" value="1"/>
</dbReference>
<dbReference type="FunFam" id="4.10.1140.10:FF:000001">
    <property type="entry name" value="Receptor protein-tyrosine kinase"/>
    <property type="match status" value="1"/>
</dbReference>
<dbReference type="FunFam" id="1.10.510.10:FF:002828">
    <property type="entry name" value="Receptor tyrosine-protein kinase erbB-2"/>
    <property type="match status" value="1"/>
</dbReference>
<dbReference type="Gene3D" id="1.20.5.100">
    <property type="entry name" value="Cytochrome c1, transmembrane anchor, C-terminal"/>
    <property type="match status" value="1"/>
</dbReference>
<dbReference type="Gene3D" id="2.10.220.10">
    <property type="entry name" value="Hormone Receptor, Insulin-like Growth Factor Receptor 1, Chain A, domain 2"/>
    <property type="match status" value="3"/>
</dbReference>
<dbReference type="Gene3D" id="4.10.1140.10">
    <property type="entry name" value="membrane-bound form of the juxtamembrane domain of the epidermal growth factor receptor like domain"/>
    <property type="match status" value="1"/>
</dbReference>
<dbReference type="Gene3D" id="3.30.200.20">
    <property type="entry name" value="Phosphorylase Kinase, domain 1"/>
    <property type="match status" value="1"/>
</dbReference>
<dbReference type="Gene3D" id="3.80.20.20">
    <property type="entry name" value="Receptor L-domain"/>
    <property type="match status" value="2"/>
</dbReference>
<dbReference type="Gene3D" id="1.10.510.10">
    <property type="entry name" value="Transferase(Phosphotransferase) domain 1"/>
    <property type="match status" value="1"/>
</dbReference>
<dbReference type="InterPro" id="IPR006211">
    <property type="entry name" value="Furin-like_Cys-rich_dom"/>
</dbReference>
<dbReference type="InterPro" id="IPR006212">
    <property type="entry name" value="Furin_repeat"/>
</dbReference>
<dbReference type="InterPro" id="IPR032778">
    <property type="entry name" value="GF_recep_IV"/>
</dbReference>
<dbReference type="InterPro" id="IPR009030">
    <property type="entry name" value="Growth_fac_rcpt_cys_sf"/>
</dbReference>
<dbReference type="InterPro" id="IPR011009">
    <property type="entry name" value="Kinase-like_dom_sf"/>
</dbReference>
<dbReference type="InterPro" id="IPR000719">
    <property type="entry name" value="Prot_kinase_dom"/>
</dbReference>
<dbReference type="InterPro" id="IPR017441">
    <property type="entry name" value="Protein_kinase_ATP_BS"/>
</dbReference>
<dbReference type="InterPro" id="IPR000494">
    <property type="entry name" value="Rcpt_L-dom"/>
</dbReference>
<dbReference type="InterPro" id="IPR036941">
    <property type="entry name" value="Rcpt_L-dom_sf"/>
</dbReference>
<dbReference type="InterPro" id="IPR050122">
    <property type="entry name" value="RTK"/>
</dbReference>
<dbReference type="InterPro" id="IPR001245">
    <property type="entry name" value="Ser-Thr/Tyr_kinase_cat_dom"/>
</dbReference>
<dbReference type="InterPro" id="IPR049328">
    <property type="entry name" value="TM_ErbB1"/>
</dbReference>
<dbReference type="InterPro" id="IPR008266">
    <property type="entry name" value="Tyr_kinase_AS"/>
</dbReference>
<dbReference type="InterPro" id="IPR020635">
    <property type="entry name" value="Tyr_kinase_cat_dom"/>
</dbReference>
<dbReference type="InterPro" id="IPR016245">
    <property type="entry name" value="Tyr_kinase_EGF/ERB/XmrK_rcpt"/>
</dbReference>
<dbReference type="PANTHER" id="PTHR24416:SF137">
    <property type="entry name" value="RECEPTOR TYROSINE-PROTEIN KINASE ERBB-2"/>
    <property type="match status" value="1"/>
</dbReference>
<dbReference type="PANTHER" id="PTHR24416">
    <property type="entry name" value="TYROSINE-PROTEIN KINASE RECEPTOR"/>
    <property type="match status" value="1"/>
</dbReference>
<dbReference type="Pfam" id="PF00757">
    <property type="entry name" value="Furin-like"/>
    <property type="match status" value="1"/>
</dbReference>
<dbReference type="Pfam" id="PF14843">
    <property type="entry name" value="GF_recep_IV"/>
    <property type="match status" value="1"/>
</dbReference>
<dbReference type="Pfam" id="PF07714">
    <property type="entry name" value="PK_Tyr_Ser-Thr"/>
    <property type="match status" value="1"/>
</dbReference>
<dbReference type="Pfam" id="PF01030">
    <property type="entry name" value="Recep_L_domain"/>
    <property type="match status" value="2"/>
</dbReference>
<dbReference type="Pfam" id="PF21314">
    <property type="entry name" value="TM_ErbB1"/>
    <property type="match status" value="1"/>
</dbReference>
<dbReference type="PIRSF" id="PIRSF000619">
    <property type="entry name" value="TyrPK_EGF-R"/>
    <property type="match status" value="1"/>
</dbReference>
<dbReference type="PRINTS" id="PR00109">
    <property type="entry name" value="TYRKINASE"/>
</dbReference>
<dbReference type="SMART" id="SM00261">
    <property type="entry name" value="FU"/>
    <property type="match status" value="3"/>
</dbReference>
<dbReference type="SMART" id="SM00219">
    <property type="entry name" value="TyrKc"/>
    <property type="match status" value="1"/>
</dbReference>
<dbReference type="SUPFAM" id="SSF57184">
    <property type="entry name" value="Growth factor receptor domain"/>
    <property type="match status" value="2"/>
</dbReference>
<dbReference type="SUPFAM" id="SSF52058">
    <property type="entry name" value="L domain-like"/>
    <property type="match status" value="2"/>
</dbReference>
<dbReference type="SUPFAM" id="SSF56112">
    <property type="entry name" value="Protein kinase-like (PK-like)"/>
    <property type="match status" value="1"/>
</dbReference>
<dbReference type="PROSITE" id="PS00107">
    <property type="entry name" value="PROTEIN_KINASE_ATP"/>
    <property type="match status" value="1"/>
</dbReference>
<dbReference type="PROSITE" id="PS50011">
    <property type="entry name" value="PROTEIN_KINASE_DOM"/>
    <property type="match status" value="1"/>
</dbReference>
<dbReference type="PROSITE" id="PS00109">
    <property type="entry name" value="PROTEIN_KINASE_TYR"/>
    <property type="match status" value="1"/>
</dbReference>
<organism>
    <name type="scientific">Canis lupus familiaris</name>
    <name type="common">Dog</name>
    <name type="synonym">Canis familiaris</name>
    <dbReference type="NCBI Taxonomy" id="9615"/>
    <lineage>
        <taxon>Eukaryota</taxon>
        <taxon>Metazoa</taxon>
        <taxon>Chordata</taxon>
        <taxon>Craniata</taxon>
        <taxon>Vertebrata</taxon>
        <taxon>Euteleostomi</taxon>
        <taxon>Mammalia</taxon>
        <taxon>Eutheria</taxon>
        <taxon>Laurasiatheria</taxon>
        <taxon>Carnivora</taxon>
        <taxon>Caniformia</taxon>
        <taxon>Canidae</taxon>
        <taxon>Canis</taxon>
    </lineage>
</organism>
<reference key="1">
    <citation type="submission" date="1997-10" db="EMBL/GenBank/DDBJ databases">
        <title>cDNA cloning of erbB-2 from canine mammary gland.</title>
        <authorList>
            <person name="Yokota H."/>
        </authorList>
    </citation>
    <scope>NUCLEOTIDE SEQUENCE [MRNA]</scope>
    <source>
        <tissue>Mammary gland</tissue>
    </source>
</reference>
<protein>
    <recommendedName>
        <fullName>Receptor tyrosine-protein kinase erbB-2</fullName>
        <ecNumber>2.7.10.1</ecNumber>
    </recommendedName>
    <alternativeName>
        <fullName>Proto-oncogene c-ErbB-2</fullName>
    </alternativeName>
    <alternativeName>
        <fullName>p185erbB2</fullName>
    </alternativeName>
    <cdAntigenName>CD340</cdAntigenName>
</protein>
<proteinExistence type="evidence at transcript level"/>
<keyword id="KW-0010">Activator</keyword>
<keyword id="KW-0067">ATP-binding</keyword>
<keyword id="KW-1003">Cell membrane</keyword>
<keyword id="KW-0966">Cell projection</keyword>
<keyword id="KW-0963">Cytoplasm</keyword>
<keyword id="KW-1015">Disulfide bond</keyword>
<keyword id="KW-0967">Endosome</keyword>
<keyword id="KW-0325">Glycoprotein</keyword>
<keyword id="KW-0418">Kinase</keyword>
<keyword id="KW-0472">Membrane</keyword>
<keyword id="KW-0547">Nucleotide-binding</keyword>
<keyword id="KW-0539">Nucleus</keyword>
<keyword id="KW-0597">Phosphoprotein</keyword>
<keyword id="KW-0675">Receptor</keyword>
<keyword id="KW-1185">Reference proteome</keyword>
<keyword id="KW-0732">Signal</keyword>
<keyword id="KW-0804">Transcription</keyword>
<keyword id="KW-0805">Transcription regulation</keyword>
<keyword id="KW-0808">Transferase</keyword>
<keyword id="KW-0812">Transmembrane</keyword>
<keyword id="KW-1133">Transmembrane helix</keyword>
<keyword id="KW-0829">Tyrosine-protein kinase</keyword>
<gene>
    <name type="primary">ERBB2</name>
</gene>
<accession>O18735</accession>
<comment type="function">
    <text evidence="1">Protein tyrosine kinase that is part of several cell surface receptor complexes, but that apparently needs a coreceptor for ligand binding. Essential component of a neuregulin-receptor complex, although neuregulins do not interact with it alone. GP30 is a potential ligand for this receptor. Regulates outgrowth and stabilization of peripheral microtubules (MTs). Upon ERBB2 activation, the MEMO1-RHOA-DIAPH1 signaling pathway elicits the phosphorylation and thus the inhibition of GSK3B at cell membrane. This prevents the phosphorylation of APC and CLASP2, allowing its association with the cell membrane. In turn, membrane-bound APC allows the localization of MACF1 to the cell membrane, which is required for microtubule capture and stabilization (By similarity).</text>
</comment>
<comment type="function">
    <text evidence="1">In the nucleus is involved in transcriptional regulation. Associates with the 5'-TCAAATTC-3' sequence in the PTGS2/COX-2 promoter and activates its transcription. Implicated in transcriptional activation of CDKN1A; the function involves STAT3 and SRC. Involved in the transcription of rRNA genes by RNA Pol I and enhances protein synthesis and cell growth (By similarity).</text>
</comment>
<comment type="catalytic activity">
    <reaction evidence="7">
        <text>L-tyrosyl-[protein] + ATP = O-phospho-L-tyrosyl-[protein] + ADP + H(+)</text>
        <dbReference type="Rhea" id="RHEA:10596"/>
        <dbReference type="Rhea" id="RHEA-COMP:10136"/>
        <dbReference type="Rhea" id="RHEA-COMP:20101"/>
        <dbReference type="ChEBI" id="CHEBI:15378"/>
        <dbReference type="ChEBI" id="CHEBI:30616"/>
        <dbReference type="ChEBI" id="CHEBI:46858"/>
        <dbReference type="ChEBI" id="CHEBI:61978"/>
        <dbReference type="ChEBI" id="CHEBI:456216"/>
        <dbReference type="EC" id="2.7.10.1"/>
    </reaction>
</comment>
<comment type="subunit">
    <text evidence="2 4">Homodimer. Heterodimer with EGFR, ERBB3 and ERBB4. Part of a complex with EGFR and either PIK3C2A or PIK3C2B. May interact with PIK3C2B when phosphorylated on Tyr-1200. Interacts with PRKCABP and PLXNB1. Interacts (when phosphorylated on Tyr-1252) with MEMO1. Interacts with MUC1. Interacts (when phosphorylated on Tyr-1138) with GRB7 (via SH2 domain). Interacts (when phosphorylated on Tyr-1252) with ERBIN. Interacts with SRC, KPNB1, PTK6, RANBP2, EEA1, CRM1, CLTC, RPA194, MYOC and ACTB. Interacts (preferentially with the tyrosine phosphorylated form) with CPNE3; this interaction occurs at the cell membrane and is increased in a growth factor heregulin-dependent manner. Interacts with HSP90AA1 and HSP90AB1 in an ATP-dependent manner; the interaction suppresses ERBB2 kinase activity (By similarity). Interacts with SORL1; this interaction regulates ERBB2 subcellular distribution by promoting its recycling after internalization from endosomes back to the plasma membrane, hence stimulates ERBB2-mediated signaling (By similarity). Interacts with SH3BGRL (By similarity). Interacts with ROR1 (By similarity).</text>
</comment>
<comment type="subcellular location">
    <subcellularLocation>
        <location evidence="2">Cell membrane</location>
        <topology evidence="2">Single-pass type I membrane protein</topology>
    </subcellularLocation>
    <subcellularLocation>
        <location evidence="2">Cell projection</location>
        <location evidence="2">Ruffle membrane</location>
        <topology evidence="2">Single-pass type I membrane protein</topology>
    </subcellularLocation>
    <subcellularLocation>
        <location evidence="2">Early endosome</location>
    </subcellularLocation>
    <subcellularLocation>
        <location evidence="2">Cytoplasm</location>
        <location evidence="2">Perinuclear region</location>
    </subcellularLocation>
    <subcellularLocation>
        <location evidence="2">Nucleus</location>
    </subcellularLocation>
    <text evidence="2">Translocation to the nucleus requires endocytosis, probably endosomal sorting and is mediated by importin beta-1/KPNB1. Also detected in endosome-to-TGN retrograde vesicles. Internalized from the cell membrane in response to EGF stimulation.</text>
</comment>
<comment type="PTM">
    <text evidence="2">Autophosphorylated. Autophosphorylation occurs in trans, i.e. one subunit of the dimeric receptor phosphorylates tyrosine residues on the other subunit. Ligand-binding increases phosphorylation on tyrosine residues. Signaling via SEMA4C promotes phosphorylation at Tyr-1252. Dephosphorylated by PTPN12.</text>
</comment>
<comment type="similarity">
    <text evidence="6">Belongs to the protein kinase superfamily. Tyr protein kinase family. EGF receptor subfamily.</text>
</comment>
<name>ERBB2_CANLF</name>
<evidence type="ECO:0000250" key="1"/>
<evidence type="ECO:0000250" key="2">
    <source>
        <dbReference type="UniProtKB" id="P04626"/>
    </source>
</evidence>
<evidence type="ECO:0000250" key="3">
    <source>
        <dbReference type="UniProtKB" id="P06494"/>
    </source>
</evidence>
<evidence type="ECO:0000250" key="4">
    <source>
        <dbReference type="UniProtKB" id="P70424"/>
    </source>
</evidence>
<evidence type="ECO:0000255" key="5"/>
<evidence type="ECO:0000255" key="6">
    <source>
        <dbReference type="PROSITE-ProRule" id="PRU00159"/>
    </source>
</evidence>
<evidence type="ECO:0000255" key="7">
    <source>
        <dbReference type="PROSITE-ProRule" id="PRU10028"/>
    </source>
</evidence>
<evidence type="ECO:0000256" key="8">
    <source>
        <dbReference type="SAM" id="MobiDB-lite"/>
    </source>
</evidence>
<feature type="signal peptide" evidence="5">
    <location>
        <begin position="1"/>
        <end position="22"/>
    </location>
</feature>
<feature type="chain" id="PRO_0000016668" description="Receptor tyrosine-protein kinase erbB-2">
    <location>
        <begin position="23"/>
        <end position="1259"/>
    </location>
</feature>
<feature type="topological domain" description="Extracellular" evidence="5">
    <location>
        <begin position="23"/>
        <end position="653"/>
    </location>
</feature>
<feature type="transmembrane region" description="Helical" evidence="5">
    <location>
        <begin position="654"/>
        <end position="674"/>
    </location>
</feature>
<feature type="topological domain" description="Cytoplasmic" evidence="5">
    <location>
        <begin position="675"/>
        <end position="1259"/>
    </location>
</feature>
<feature type="domain" description="Protein kinase" evidence="6">
    <location>
        <begin position="719"/>
        <end position="986"/>
    </location>
</feature>
<feature type="region of interest" description="Required for interaction with KPNB1 and EEA1" evidence="1">
    <location>
        <begin position="675"/>
        <end position="688"/>
    </location>
</feature>
<feature type="region of interest" description="Disordered" evidence="8">
    <location>
        <begin position="1027"/>
        <end position="1183"/>
    </location>
</feature>
<feature type="region of interest" description="Interaction with PIK3C2B" evidence="1">
    <location>
        <begin position="1199"/>
        <end position="1201"/>
    </location>
</feature>
<feature type="region of interest" description="Disordered" evidence="8">
    <location>
        <begin position="1203"/>
        <end position="1259"/>
    </location>
</feature>
<feature type="short sequence motif" description="Nuclear localization signal" evidence="1">
    <location>
        <begin position="675"/>
        <end position="688"/>
    </location>
</feature>
<feature type="compositionally biased region" description="Pro residues" evidence="8">
    <location>
        <begin position="1145"/>
        <end position="1160"/>
    </location>
</feature>
<feature type="compositionally biased region" description="Polar residues" evidence="8">
    <location>
        <begin position="1237"/>
        <end position="1247"/>
    </location>
</feature>
<feature type="active site" description="Proton acceptor" evidence="6 7">
    <location>
        <position position="844"/>
    </location>
</feature>
<feature type="binding site" evidence="6">
    <location>
        <begin position="725"/>
        <end position="733"/>
    </location>
    <ligand>
        <name>ATP</name>
        <dbReference type="ChEBI" id="CHEBI:30616"/>
    </ligand>
</feature>
<feature type="binding site" evidence="6">
    <location>
        <position position="752"/>
    </location>
    <ligand>
        <name>ATP</name>
        <dbReference type="ChEBI" id="CHEBI:30616"/>
    </ligand>
</feature>
<feature type="modified residue" description="Phosphothreonine" evidence="2">
    <location>
        <position position="182"/>
    </location>
</feature>
<feature type="modified residue" description="Phosphotyrosine" evidence="2">
    <location>
        <position position="876"/>
    </location>
</feature>
<feature type="modified residue" description="Phosphoserine" evidence="3">
    <location>
        <position position="1077"/>
    </location>
</feature>
<feature type="modified residue" description="Phosphoserine" evidence="2">
    <location>
        <position position="1082"/>
    </location>
</feature>
<feature type="modified residue" description="Phosphoserine" evidence="2">
    <location>
        <position position="1106"/>
    </location>
</feature>
<feature type="modified residue" description="Phosphotyrosine" evidence="2">
    <location>
        <position position="1111"/>
    </location>
</feature>
<feature type="modified residue" description="Phosphotyrosine; by autocatalysis" evidence="2">
    <location>
        <position position="1138"/>
    </location>
</feature>
<feature type="modified residue" description="Phosphothreonine" evidence="2">
    <location>
        <position position="1165"/>
    </location>
</feature>
<feature type="modified residue" description="Phosphotyrosine" evidence="2">
    <location>
        <position position="1200"/>
    </location>
</feature>
<feature type="modified residue" description="Phosphotyrosine; by autocatalysis" evidence="2">
    <location>
        <position position="1252"/>
    </location>
</feature>
<feature type="glycosylation site" description="N-linked (GlcNAc...) asparagine" evidence="5">
    <location>
        <position position="68"/>
    </location>
</feature>
<feature type="glycosylation site" description="N-linked (GlcNAc...) asparagine" evidence="5">
    <location>
        <position position="259"/>
    </location>
</feature>
<feature type="glycosylation site" description="N-linked (GlcNAc...) asparagine" evidence="5">
    <location>
        <position position="421"/>
    </location>
</feature>
<feature type="glycosylation site" description="N-linked (GlcNAc...) asparagine" evidence="5">
    <location>
        <position position="529"/>
    </location>
</feature>
<feature type="glycosylation site" description="N-linked (GlcNAc...) asparagine" evidence="5">
    <location>
        <position position="570"/>
    </location>
</feature>
<feature type="glycosylation site" description="N-linked (GlcNAc...) asparagine" evidence="5">
    <location>
        <position position="628"/>
    </location>
</feature>
<feature type="disulfide bond" evidence="2">
    <location>
        <begin position="26"/>
        <end position="53"/>
    </location>
</feature>
<feature type="disulfide bond" evidence="2">
    <location>
        <begin position="162"/>
        <end position="192"/>
    </location>
</feature>
<feature type="disulfide bond" evidence="2">
    <location>
        <begin position="195"/>
        <end position="204"/>
    </location>
</feature>
<feature type="disulfide bond" evidence="2">
    <location>
        <begin position="199"/>
        <end position="212"/>
    </location>
</feature>
<feature type="disulfide bond" evidence="2">
    <location>
        <begin position="220"/>
        <end position="227"/>
    </location>
</feature>
<feature type="disulfide bond" evidence="2">
    <location>
        <begin position="224"/>
        <end position="235"/>
    </location>
</feature>
<feature type="disulfide bond" evidence="2">
    <location>
        <begin position="236"/>
        <end position="244"/>
    </location>
</feature>
<feature type="disulfide bond" evidence="2">
    <location>
        <begin position="240"/>
        <end position="252"/>
    </location>
</feature>
<feature type="disulfide bond" evidence="2">
    <location>
        <begin position="255"/>
        <end position="264"/>
    </location>
</feature>
<feature type="disulfide bond" evidence="2">
    <location>
        <begin position="268"/>
        <end position="295"/>
    </location>
</feature>
<feature type="disulfide bond" evidence="2">
    <location>
        <begin position="299"/>
        <end position="311"/>
    </location>
</feature>
<feature type="disulfide bond" evidence="2">
    <location>
        <begin position="315"/>
        <end position="331"/>
    </location>
</feature>
<feature type="disulfide bond" evidence="2">
    <location>
        <begin position="334"/>
        <end position="338"/>
    </location>
</feature>
<feature type="disulfide bond" evidence="2">
    <location>
        <begin position="342"/>
        <end position="367"/>
    </location>
</feature>
<feature type="disulfide bond" evidence="2">
    <location>
        <begin position="475"/>
        <end position="504"/>
    </location>
</feature>
<feature type="disulfide bond" evidence="2">
    <location>
        <begin position="511"/>
        <end position="519"/>
    </location>
</feature>
<feature type="disulfide bond" evidence="2">
    <location>
        <begin position="514"/>
        <end position="527"/>
    </location>
</feature>
<feature type="disulfide bond" evidence="2">
    <location>
        <begin position="530"/>
        <end position="539"/>
    </location>
</feature>
<feature type="disulfide bond" evidence="2">
    <location>
        <begin position="543"/>
        <end position="559"/>
    </location>
</feature>
<feature type="disulfide bond" evidence="2">
    <location>
        <begin position="562"/>
        <end position="575"/>
    </location>
</feature>
<feature type="disulfide bond" evidence="2">
    <location>
        <begin position="566"/>
        <end position="583"/>
    </location>
</feature>
<feature type="disulfide bond" evidence="2">
    <location>
        <begin position="586"/>
        <end position="595"/>
    </location>
</feature>
<feature type="disulfide bond" evidence="2">
    <location>
        <begin position="599"/>
        <end position="622"/>
    </location>
</feature>
<feature type="disulfide bond" evidence="2">
    <location>
        <begin position="625"/>
        <end position="633"/>
    </location>
</feature>
<feature type="disulfide bond" evidence="2">
    <location>
        <begin position="629"/>
        <end position="641"/>
    </location>
</feature>
<sequence>MELAAWCRWGLLLALLPSGAAGTQVCTGTDMKLRLPASPETHLDMLRHLYQGCQVVQGNLELTYLPANASLSFLQDIQEVQGYVLIAHSQVRQIPLQRLRIVRGTQLFEDNYALAVLDNGDPLEGGIPAPGAAQGGLRELQLRSLTEILKGGVLIQRSPQLCHQDTILWKDVFHKNNQLALTLIDTNRFSACPPCSPACKDAHCWGASSGDCQSLTRTVCAGGCARCKGPQPTDCCHEQCAAGCTGPKHSDCLACLHFNHSGICELHCPALVTYNTDTFESMPNPEGRYTFGASCVTSCPYNYLSTDVGSCTLVCPLNNQEVTAEDGTQRCEKCSKPCARVCYGLGMEHLREVRAVTSANIQEFAGCKKIFGSLAFLPESFDGDPASNTAPLQPEQLRVFEALEEITGYLYISAWPDSLPNLSVFQNLRVIRGRVLHDGAYSLTLQGLGISWLGLRSLRELGSGLALIHRNARLCFVHTVPWDQLFRNPHQALLHSANRPEEECVGEGLACYPCAHGHCWGPGPTQCVNCSQFLRGQECVEECRVLQGLPREYVKDRYCLPCHSECQPQNGSVTCFGSEADQCVACAHYKDPPFCVARCPSGVKPDLSFMPIWKFADEEGTCQPCPINCTHSCADLDEKGCPAEQRASPVTSIIAAVVGILLAVVVGLVLGILIKRRRQKIRKYTMRRLLQETELVEPLTPSGAMPNQAQMRILKETELRKVKVLGSGAFGTVYKGIWIPDGENVKIPVAIKVLRENTSPKANKEILDEAYVMAGVGSPYVSRLLGICLTSTVQLVTQLMPYGCLLDHVREHRGRLGSQDLLNWCVQIAKGMSYLEDVRLVHRDLAARNVLVKSPNHVKITDFGLARLLDIDETEYHADGGKVPIKWMALESIPPRRFTHQSDVWSYGVTVWELMTFGAKPYDGIPAREIPDLLEKGERLPQPPICTIDVYMIMVKCWMIDSECRPRFRELVAEFSRMARDPQRFVVIQNEDLGPASPLDSTFYRSLLEDDDMGDLVDAEEYLVPQQGFFCPEPTPGAGGTAHRRHRSSSTRNGGGELTLGLEPSEEEPPKSPLAPSEGAGSDVFDGDLGMGAAKGLQSLPSQDPSPLQRYSEDPTVPLPPETDGKVAPLTCSPQPEYVNQPEVWPQPPLALEGPLPPSRPAGATLERPKTLSPKTLSPGKNGVVKDVFAFGSAVENPEYLAPRGRAAPQPHPPPAFSPAFDNLYYWDQDPSERGSPPSTFEGTPTAENPEYLGLDVPV</sequence>